<accession>C1CSJ6</accession>
<gene>
    <name evidence="1" type="primary">metAA</name>
    <name type="ordered locus">SPT_1516</name>
</gene>
<comment type="function">
    <text evidence="1">Transfers an acetyl group from acetyl-CoA to L-homoserine, forming acetyl-L-homoserine.</text>
</comment>
<comment type="catalytic activity">
    <reaction evidence="1">
        <text>L-homoserine + acetyl-CoA = O-acetyl-L-homoserine + CoA</text>
        <dbReference type="Rhea" id="RHEA:13701"/>
        <dbReference type="ChEBI" id="CHEBI:57287"/>
        <dbReference type="ChEBI" id="CHEBI:57288"/>
        <dbReference type="ChEBI" id="CHEBI:57476"/>
        <dbReference type="ChEBI" id="CHEBI:57716"/>
        <dbReference type="EC" id="2.3.1.31"/>
    </reaction>
</comment>
<comment type="pathway">
    <text evidence="1">Amino-acid biosynthesis; L-methionine biosynthesis via de novo pathway; O-acetyl-L-homoserine from L-homoserine: step 1/1.</text>
</comment>
<comment type="subcellular location">
    <subcellularLocation>
        <location evidence="1">Cytoplasm</location>
    </subcellularLocation>
</comment>
<comment type="similarity">
    <text evidence="1">Belongs to the MetA family.</text>
</comment>
<reference key="1">
    <citation type="journal article" date="2010" name="Genome Biol.">
        <title>Structure and dynamics of the pan-genome of Streptococcus pneumoniae and closely related species.</title>
        <authorList>
            <person name="Donati C."/>
            <person name="Hiller N.L."/>
            <person name="Tettelin H."/>
            <person name="Muzzi A."/>
            <person name="Croucher N.J."/>
            <person name="Angiuoli S.V."/>
            <person name="Oggioni M."/>
            <person name="Dunning Hotopp J.C."/>
            <person name="Hu F.Z."/>
            <person name="Riley D.R."/>
            <person name="Covacci A."/>
            <person name="Mitchell T.J."/>
            <person name="Bentley S.D."/>
            <person name="Kilian M."/>
            <person name="Ehrlich G.D."/>
            <person name="Rappuoli R."/>
            <person name="Moxon E.R."/>
            <person name="Masignani V."/>
        </authorList>
    </citation>
    <scope>NUCLEOTIDE SEQUENCE [LARGE SCALE GENOMIC DNA]</scope>
    <source>
        <strain>Taiwan19F-14</strain>
    </source>
</reference>
<organism>
    <name type="scientific">Streptococcus pneumoniae (strain Taiwan19F-14)</name>
    <dbReference type="NCBI Taxonomy" id="487213"/>
    <lineage>
        <taxon>Bacteria</taxon>
        <taxon>Bacillati</taxon>
        <taxon>Bacillota</taxon>
        <taxon>Bacilli</taxon>
        <taxon>Lactobacillales</taxon>
        <taxon>Streptococcaceae</taxon>
        <taxon>Streptococcus</taxon>
    </lineage>
</organism>
<dbReference type="EC" id="2.3.1.31" evidence="1"/>
<dbReference type="EMBL" id="CP000921">
    <property type="protein sequence ID" value="ACO24229.1"/>
    <property type="molecule type" value="Genomic_DNA"/>
</dbReference>
<dbReference type="RefSeq" id="WP_001122724.1">
    <property type="nucleotide sequence ID" value="NC_012469.1"/>
</dbReference>
<dbReference type="SMR" id="C1CSJ6"/>
<dbReference type="KEGG" id="snt:SPT_1516"/>
<dbReference type="HOGENOM" id="CLU_057851_0_1_9"/>
<dbReference type="UniPathway" id="UPA00051">
    <property type="reaction ID" value="UER00074"/>
</dbReference>
<dbReference type="GO" id="GO:0005737">
    <property type="term" value="C:cytoplasm"/>
    <property type="evidence" value="ECO:0007669"/>
    <property type="project" value="UniProtKB-SubCell"/>
</dbReference>
<dbReference type="GO" id="GO:0004414">
    <property type="term" value="F:homoserine O-acetyltransferase activity"/>
    <property type="evidence" value="ECO:0007669"/>
    <property type="project" value="UniProtKB-EC"/>
</dbReference>
<dbReference type="GO" id="GO:0008899">
    <property type="term" value="F:homoserine O-succinyltransferase activity"/>
    <property type="evidence" value="ECO:0007669"/>
    <property type="project" value="UniProtKB-UniRule"/>
</dbReference>
<dbReference type="GO" id="GO:0019281">
    <property type="term" value="P:L-methionine biosynthetic process from homoserine via O-succinyl-L-homoserine and cystathionine"/>
    <property type="evidence" value="ECO:0007669"/>
    <property type="project" value="InterPro"/>
</dbReference>
<dbReference type="CDD" id="cd03131">
    <property type="entry name" value="GATase1_HTS"/>
    <property type="match status" value="1"/>
</dbReference>
<dbReference type="FunFam" id="3.40.50.880:FF:000004">
    <property type="entry name" value="Homoserine O-succinyltransferase"/>
    <property type="match status" value="1"/>
</dbReference>
<dbReference type="Gene3D" id="3.40.50.880">
    <property type="match status" value="1"/>
</dbReference>
<dbReference type="HAMAP" id="MF_00295">
    <property type="entry name" value="MetA_acyltransf"/>
    <property type="match status" value="1"/>
</dbReference>
<dbReference type="InterPro" id="IPR029062">
    <property type="entry name" value="Class_I_gatase-like"/>
</dbReference>
<dbReference type="InterPro" id="IPR005697">
    <property type="entry name" value="HST_MetA"/>
</dbReference>
<dbReference type="InterPro" id="IPR033752">
    <property type="entry name" value="MetA_family"/>
</dbReference>
<dbReference type="NCBIfam" id="TIGR01001">
    <property type="entry name" value="metA"/>
    <property type="match status" value="1"/>
</dbReference>
<dbReference type="PANTHER" id="PTHR20919">
    <property type="entry name" value="HOMOSERINE O-SUCCINYLTRANSFERASE"/>
    <property type="match status" value="1"/>
</dbReference>
<dbReference type="PANTHER" id="PTHR20919:SF0">
    <property type="entry name" value="HOMOSERINE O-SUCCINYLTRANSFERASE"/>
    <property type="match status" value="1"/>
</dbReference>
<dbReference type="Pfam" id="PF04204">
    <property type="entry name" value="HTS"/>
    <property type="match status" value="1"/>
</dbReference>
<dbReference type="PIRSF" id="PIRSF000450">
    <property type="entry name" value="H_ser_succinyltr"/>
    <property type="match status" value="1"/>
</dbReference>
<dbReference type="SUPFAM" id="SSF52317">
    <property type="entry name" value="Class I glutamine amidotransferase-like"/>
    <property type="match status" value="1"/>
</dbReference>
<sequence>MPIRIDKKLPAVEILRTENIFVMDDQRAAHQDIRPLKILILNLMPQKMVTETQLLRHLANTPLQLDIDFLYMESHRSKTTRSEHMETFYKTFPEVKDEYFDGMIITGAPVEHLPFEEVDYWEEFTQVLEWSKTHVYSTLHICWGAQAGLYLRYGVEKYQMDSKLSGIYPQDTLKEGHLLFRGFDDSYVSPHSRHTEISKEEILNKTNLEILSEGPQVGVSILASRDLREIYSFGHLEYDRDTLAKEYFRDCDAGLAPHIPENYFKDDDVNQTPCLCWSSSAALFFSNWVNYAVYQETPFDWRKIEDDASAYGYL</sequence>
<proteinExistence type="inferred from homology"/>
<evidence type="ECO:0000255" key="1">
    <source>
        <dbReference type="HAMAP-Rule" id="MF_00295"/>
    </source>
</evidence>
<keyword id="KW-0012">Acyltransferase</keyword>
<keyword id="KW-0028">Amino-acid biosynthesis</keyword>
<keyword id="KW-0963">Cytoplasm</keyword>
<keyword id="KW-0486">Methionine biosynthesis</keyword>
<keyword id="KW-0808">Transferase</keyword>
<feature type="chain" id="PRO_1000132716" description="Homoserine O-acetyltransferase">
    <location>
        <begin position="1"/>
        <end position="314"/>
    </location>
</feature>
<feature type="active site" description="Acyl-thioester intermediate" evidence="1">
    <location>
        <position position="142"/>
    </location>
</feature>
<feature type="active site" description="Proton acceptor" evidence="1">
    <location>
        <position position="235"/>
    </location>
</feature>
<feature type="active site" evidence="1">
    <location>
        <position position="237"/>
    </location>
</feature>
<feature type="binding site" evidence="1">
    <location>
        <position position="163"/>
    </location>
    <ligand>
        <name>substrate</name>
    </ligand>
</feature>
<feature type="binding site" evidence="1">
    <location>
        <position position="192"/>
    </location>
    <ligand>
        <name>substrate</name>
    </ligand>
</feature>
<feature type="binding site" evidence="1">
    <location>
        <position position="249"/>
    </location>
    <ligand>
        <name>substrate</name>
    </ligand>
</feature>
<feature type="site" description="Important for acyl-CoA specificity" evidence="1">
    <location>
        <position position="111"/>
    </location>
</feature>
<feature type="site" description="Important for substrate specificity" evidence="1">
    <location>
        <position position="192"/>
    </location>
</feature>
<name>METAA_STRZT</name>
<protein>
    <recommendedName>
        <fullName evidence="1">Homoserine O-acetyltransferase</fullName>
        <shortName evidence="1">HAT</shortName>
        <ecNumber evidence="1">2.3.1.31</ecNumber>
    </recommendedName>
    <alternativeName>
        <fullName evidence="1">Homoserine transacetylase</fullName>
        <shortName evidence="1">HTA</shortName>
    </alternativeName>
</protein>